<sequence>MSKVYVFDHPLIQHKLTYIRDKHTGTKEFRELVEEVATLMAFEITRDLPLQEVDIETPVSKAKAKVIAGKKLGIIPILRAGIGMVDGILKLIPAAKVGHIGLYRDPETLKPVEYYVKLPTDVEERDFIVVDPMLATGGSAVEAIHALKKRGAKNIKFMCLIAAPEGVEAVQQAHPDVDIYIAALDEKLNDHGYIVPGLGDAGDRLFGTK</sequence>
<accession>B7GMG3</accession>
<feature type="chain" id="PRO_1000139092" description="Uracil phosphoribosyltransferase">
    <location>
        <begin position="1"/>
        <end position="209"/>
    </location>
</feature>
<feature type="binding site" evidence="1">
    <location>
        <position position="79"/>
    </location>
    <ligand>
        <name>5-phospho-alpha-D-ribose 1-diphosphate</name>
        <dbReference type="ChEBI" id="CHEBI:58017"/>
    </ligand>
</feature>
<feature type="binding site" evidence="1">
    <location>
        <position position="104"/>
    </location>
    <ligand>
        <name>5-phospho-alpha-D-ribose 1-diphosphate</name>
        <dbReference type="ChEBI" id="CHEBI:58017"/>
    </ligand>
</feature>
<feature type="binding site" evidence="1">
    <location>
        <begin position="131"/>
        <end position="139"/>
    </location>
    <ligand>
        <name>5-phospho-alpha-D-ribose 1-diphosphate</name>
        <dbReference type="ChEBI" id="CHEBI:58017"/>
    </ligand>
</feature>
<feature type="binding site" evidence="1">
    <location>
        <position position="194"/>
    </location>
    <ligand>
        <name>uracil</name>
        <dbReference type="ChEBI" id="CHEBI:17568"/>
    </ligand>
</feature>
<feature type="binding site" evidence="1">
    <location>
        <begin position="199"/>
        <end position="201"/>
    </location>
    <ligand>
        <name>uracil</name>
        <dbReference type="ChEBI" id="CHEBI:17568"/>
    </ligand>
</feature>
<feature type="binding site" evidence="1">
    <location>
        <position position="200"/>
    </location>
    <ligand>
        <name>5-phospho-alpha-D-ribose 1-diphosphate</name>
        <dbReference type="ChEBI" id="CHEBI:58017"/>
    </ligand>
</feature>
<comment type="function">
    <text evidence="1">Catalyzes the conversion of uracil and 5-phospho-alpha-D-ribose 1-diphosphate (PRPP) to UMP and diphosphate.</text>
</comment>
<comment type="catalytic activity">
    <reaction evidence="1">
        <text>UMP + diphosphate = 5-phospho-alpha-D-ribose 1-diphosphate + uracil</text>
        <dbReference type="Rhea" id="RHEA:13017"/>
        <dbReference type="ChEBI" id="CHEBI:17568"/>
        <dbReference type="ChEBI" id="CHEBI:33019"/>
        <dbReference type="ChEBI" id="CHEBI:57865"/>
        <dbReference type="ChEBI" id="CHEBI:58017"/>
        <dbReference type="EC" id="2.4.2.9"/>
    </reaction>
</comment>
<comment type="cofactor">
    <cofactor evidence="1">
        <name>Mg(2+)</name>
        <dbReference type="ChEBI" id="CHEBI:18420"/>
    </cofactor>
    <text evidence="1">Binds 1 Mg(2+) ion per subunit. The magnesium is bound as Mg-PRPP.</text>
</comment>
<comment type="activity regulation">
    <text evidence="1">Allosterically activated by GTP.</text>
</comment>
<comment type="pathway">
    <text evidence="1">Pyrimidine metabolism; UMP biosynthesis via salvage pathway; UMP from uracil: step 1/1.</text>
</comment>
<comment type="similarity">
    <text evidence="1">Belongs to the UPRTase family.</text>
</comment>
<protein>
    <recommendedName>
        <fullName evidence="1">Uracil phosphoribosyltransferase</fullName>
        <ecNumber evidence="1">2.4.2.9</ecNumber>
    </recommendedName>
    <alternativeName>
        <fullName evidence="1">UMP pyrophosphorylase</fullName>
    </alternativeName>
    <alternativeName>
        <fullName evidence="1">UPRTase</fullName>
    </alternativeName>
</protein>
<evidence type="ECO:0000255" key="1">
    <source>
        <dbReference type="HAMAP-Rule" id="MF_01218"/>
    </source>
</evidence>
<dbReference type="EC" id="2.4.2.9" evidence="1"/>
<dbReference type="EMBL" id="CP000922">
    <property type="protein sequence ID" value="ACJ35065.1"/>
    <property type="molecule type" value="Genomic_DNA"/>
</dbReference>
<dbReference type="RefSeq" id="WP_006320960.1">
    <property type="nucleotide sequence ID" value="NC_011567.1"/>
</dbReference>
<dbReference type="SMR" id="B7GMG3"/>
<dbReference type="STRING" id="491915.Aflv_2712"/>
<dbReference type="GeneID" id="7038985"/>
<dbReference type="KEGG" id="afl:Aflv_2712"/>
<dbReference type="eggNOG" id="COG0035">
    <property type="taxonomic scope" value="Bacteria"/>
</dbReference>
<dbReference type="HOGENOM" id="CLU_067096_2_2_9"/>
<dbReference type="UniPathway" id="UPA00574">
    <property type="reaction ID" value="UER00636"/>
</dbReference>
<dbReference type="Proteomes" id="UP000000742">
    <property type="component" value="Chromosome"/>
</dbReference>
<dbReference type="GO" id="GO:0005525">
    <property type="term" value="F:GTP binding"/>
    <property type="evidence" value="ECO:0007669"/>
    <property type="project" value="UniProtKB-KW"/>
</dbReference>
<dbReference type="GO" id="GO:0000287">
    <property type="term" value="F:magnesium ion binding"/>
    <property type="evidence" value="ECO:0007669"/>
    <property type="project" value="UniProtKB-UniRule"/>
</dbReference>
<dbReference type="GO" id="GO:0004845">
    <property type="term" value="F:uracil phosphoribosyltransferase activity"/>
    <property type="evidence" value="ECO:0007669"/>
    <property type="project" value="UniProtKB-UniRule"/>
</dbReference>
<dbReference type="GO" id="GO:0044206">
    <property type="term" value="P:UMP salvage"/>
    <property type="evidence" value="ECO:0007669"/>
    <property type="project" value="UniProtKB-UniRule"/>
</dbReference>
<dbReference type="GO" id="GO:0006223">
    <property type="term" value="P:uracil salvage"/>
    <property type="evidence" value="ECO:0007669"/>
    <property type="project" value="InterPro"/>
</dbReference>
<dbReference type="CDD" id="cd06223">
    <property type="entry name" value="PRTases_typeI"/>
    <property type="match status" value="1"/>
</dbReference>
<dbReference type="FunFam" id="3.40.50.2020:FF:000003">
    <property type="entry name" value="Uracil phosphoribosyltransferase"/>
    <property type="match status" value="1"/>
</dbReference>
<dbReference type="Gene3D" id="3.40.50.2020">
    <property type="match status" value="1"/>
</dbReference>
<dbReference type="HAMAP" id="MF_01218_B">
    <property type="entry name" value="Upp_B"/>
    <property type="match status" value="1"/>
</dbReference>
<dbReference type="InterPro" id="IPR000836">
    <property type="entry name" value="PRibTrfase_dom"/>
</dbReference>
<dbReference type="InterPro" id="IPR029057">
    <property type="entry name" value="PRTase-like"/>
</dbReference>
<dbReference type="InterPro" id="IPR034332">
    <property type="entry name" value="Upp_B"/>
</dbReference>
<dbReference type="InterPro" id="IPR050054">
    <property type="entry name" value="UPRTase/APRTase"/>
</dbReference>
<dbReference type="InterPro" id="IPR005765">
    <property type="entry name" value="Ura_phspho_trans"/>
</dbReference>
<dbReference type="NCBIfam" id="NF001097">
    <property type="entry name" value="PRK00129.1"/>
    <property type="match status" value="1"/>
</dbReference>
<dbReference type="NCBIfam" id="TIGR01091">
    <property type="entry name" value="upp"/>
    <property type="match status" value="1"/>
</dbReference>
<dbReference type="PANTHER" id="PTHR32315">
    <property type="entry name" value="ADENINE PHOSPHORIBOSYLTRANSFERASE"/>
    <property type="match status" value="1"/>
</dbReference>
<dbReference type="PANTHER" id="PTHR32315:SF4">
    <property type="entry name" value="URACIL PHOSPHORIBOSYLTRANSFERASE, CHLOROPLASTIC"/>
    <property type="match status" value="1"/>
</dbReference>
<dbReference type="Pfam" id="PF14681">
    <property type="entry name" value="UPRTase"/>
    <property type="match status" value="1"/>
</dbReference>
<dbReference type="SUPFAM" id="SSF53271">
    <property type="entry name" value="PRTase-like"/>
    <property type="match status" value="1"/>
</dbReference>
<organism>
    <name type="scientific">Anoxybacillus flavithermus (strain DSM 21510 / WK1)</name>
    <dbReference type="NCBI Taxonomy" id="491915"/>
    <lineage>
        <taxon>Bacteria</taxon>
        <taxon>Bacillati</taxon>
        <taxon>Bacillota</taxon>
        <taxon>Bacilli</taxon>
        <taxon>Bacillales</taxon>
        <taxon>Anoxybacillaceae</taxon>
        <taxon>Anoxybacillus</taxon>
    </lineage>
</organism>
<gene>
    <name evidence="1" type="primary">upp</name>
    <name type="ordered locus">Aflv_2712</name>
</gene>
<reference key="1">
    <citation type="journal article" date="2008" name="Genome Biol.">
        <title>Encapsulated in silica: genome, proteome and physiology of the thermophilic bacterium Anoxybacillus flavithermus WK1.</title>
        <authorList>
            <person name="Saw J.H."/>
            <person name="Mountain B.W."/>
            <person name="Feng L."/>
            <person name="Omelchenko M.V."/>
            <person name="Hou S."/>
            <person name="Saito J.A."/>
            <person name="Stott M.B."/>
            <person name="Li D."/>
            <person name="Zhao G."/>
            <person name="Wu J."/>
            <person name="Galperin M.Y."/>
            <person name="Koonin E.V."/>
            <person name="Makarova K.S."/>
            <person name="Wolf Y.I."/>
            <person name="Rigden D.J."/>
            <person name="Dunfield P.F."/>
            <person name="Wang L."/>
            <person name="Alam M."/>
        </authorList>
    </citation>
    <scope>NUCLEOTIDE SEQUENCE [LARGE SCALE GENOMIC DNA]</scope>
    <source>
        <strain>DSM 21510 / WK1</strain>
    </source>
</reference>
<keyword id="KW-0021">Allosteric enzyme</keyword>
<keyword id="KW-0328">Glycosyltransferase</keyword>
<keyword id="KW-0342">GTP-binding</keyword>
<keyword id="KW-0460">Magnesium</keyword>
<keyword id="KW-0547">Nucleotide-binding</keyword>
<keyword id="KW-0808">Transferase</keyword>
<proteinExistence type="inferred from homology"/>
<name>UPP_ANOFW</name>